<reference key="1">
    <citation type="journal article" date="1998" name="Science">
        <title>Complete genome sequence of Treponema pallidum, the syphilis spirochete.</title>
        <authorList>
            <person name="Fraser C.M."/>
            <person name="Norris S.J."/>
            <person name="Weinstock G.M."/>
            <person name="White O."/>
            <person name="Sutton G.G."/>
            <person name="Dodson R.J."/>
            <person name="Gwinn M.L."/>
            <person name="Hickey E.K."/>
            <person name="Clayton R.A."/>
            <person name="Ketchum K.A."/>
            <person name="Sodergren E."/>
            <person name="Hardham J.M."/>
            <person name="McLeod M.P."/>
            <person name="Salzberg S.L."/>
            <person name="Peterson J.D."/>
            <person name="Khalak H.G."/>
            <person name="Richardson D.L."/>
            <person name="Howell J.K."/>
            <person name="Chidambaram M."/>
            <person name="Utterback T.R."/>
            <person name="McDonald L.A."/>
            <person name="Artiach P."/>
            <person name="Bowman C."/>
            <person name="Cotton M.D."/>
            <person name="Fujii C."/>
            <person name="Garland S.A."/>
            <person name="Hatch B."/>
            <person name="Horst K."/>
            <person name="Roberts K.M."/>
            <person name="Sandusky M."/>
            <person name="Weidman J.F."/>
            <person name="Smith H.O."/>
            <person name="Venter J.C."/>
        </authorList>
    </citation>
    <scope>NUCLEOTIDE SEQUENCE [LARGE SCALE GENOMIC DNA]</scope>
    <source>
        <strain>Nichols</strain>
    </source>
</reference>
<evidence type="ECO:0000255" key="1">
    <source>
        <dbReference type="HAMAP-Rule" id="MF_02006"/>
    </source>
</evidence>
<evidence type="ECO:0000305" key="2"/>
<accession>O83806</accession>
<protein>
    <recommendedName>
        <fullName evidence="1">Tyrosine--tRNA ligase</fullName>
        <ecNumber evidence="1">6.1.1.1</ecNumber>
    </recommendedName>
    <alternativeName>
        <fullName evidence="1">Tyrosyl-tRNA synthetase</fullName>
        <shortName evidence="1">TyrRS</shortName>
    </alternativeName>
</protein>
<dbReference type="EC" id="6.1.1.1" evidence="1"/>
<dbReference type="EMBL" id="AE000520">
    <property type="protein sequence ID" value="AAC65798.1"/>
    <property type="status" value="ALT_INIT"/>
    <property type="molecule type" value="Genomic_DNA"/>
</dbReference>
<dbReference type="PIR" id="D71277">
    <property type="entry name" value="D71277"/>
</dbReference>
<dbReference type="RefSeq" id="WP_014342602.1">
    <property type="nucleotide sequence ID" value="NC_021490.2"/>
</dbReference>
<dbReference type="SMR" id="O83806"/>
<dbReference type="IntAct" id="O83806">
    <property type="interactions" value="1"/>
</dbReference>
<dbReference type="STRING" id="243276.TP_0834"/>
<dbReference type="EnsemblBacteria" id="AAC65798">
    <property type="protein sequence ID" value="AAC65798"/>
    <property type="gene ID" value="TP_0834"/>
</dbReference>
<dbReference type="GeneID" id="93876592"/>
<dbReference type="KEGG" id="tpa:TP_0834"/>
<dbReference type="eggNOG" id="COG0162">
    <property type="taxonomic scope" value="Bacteria"/>
</dbReference>
<dbReference type="HOGENOM" id="CLU_024003_0_3_12"/>
<dbReference type="Proteomes" id="UP000000811">
    <property type="component" value="Chromosome"/>
</dbReference>
<dbReference type="GO" id="GO:0005829">
    <property type="term" value="C:cytosol"/>
    <property type="evidence" value="ECO:0007669"/>
    <property type="project" value="TreeGrafter"/>
</dbReference>
<dbReference type="GO" id="GO:0005524">
    <property type="term" value="F:ATP binding"/>
    <property type="evidence" value="ECO:0007669"/>
    <property type="project" value="UniProtKB-UniRule"/>
</dbReference>
<dbReference type="GO" id="GO:0003723">
    <property type="term" value="F:RNA binding"/>
    <property type="evidence" value="ECO:0007669"/>
    <property type="project" value="UniProtKB-KW"/>
</dbReference>
<dbReference type="GO" id="GO:0004831">
    <property type="term" value="F:tyrosine-tRNA ligase activity"/>
    <property type="evidence" value="ECO:0007669"/>
    <property type="project" value="UniProtKB-UniRule"/>
</dbReference>
<dbReference type="GO" id="GO:0006437">
    <property type="term" value="P:tyrosyl-tRNA aminoacylation"/>
    <property type="evidence" value="ECO:0007669"/>
    <property type="project" value="UniProtKB-UniRule"/>
</dbReference>
<dbReference type="CDD" id="cd00805">
    <property type="entry name" value="TyrRS_core"/>
    <property type="match status" value="1"/>
</dbReference>
<dbReference type="Gene3D" id="3.40.50.620">
    <property type="entry name" value="HUPs"/>
    <property type="match status" value="1"/>
</dbReference>
<dbReference type="Gene3D" id="3.10.290.10">
    <property type="entry name" value="RNA-binding S4 domain"/>
    <property type="match status" value="1"/>
</dbReference>
<dbReference type="Gene3D" id="1.10.240.10">
    <property type="entry name" value="Tyrosyl-Transfer RNA Synthetase"/>
    <property type="match status" value="1"/>
</dbReference>
<dbReference type="HAMAP" id="MF_02006">
    <property type="entry name" value="Tyr_tRNA_synth_type1"/>
    <property type="match status" value="1"/>
</dbReference>
<dbReference type="InterPro" id="IPR002305">
    <property type="entry name" value="aa-tRNA-synth_Ic"/>
</dbReference>
<dbReference type="InterPro" id="IPR014729">
    <property type="entry name" value="Rossmann-like_a/b/a_fold"/>
</dbReference>
<dbReference type="InterPro" id="IPR036986">
    <property type="entry name" value="S4_RNA-bd_sf"/>
</dbReference>
<dbReference type="InterPro" id="IPR002307">
    <property type="entry name" value="Tyr-tRNA-ligase"/>
</dbReference>
<dbReference type="InterPro" id="IPR024088">
    <property type="entry name" value="Tyr-tRNA-ligase_bac-type"/>
</dbReference>
<dbReference type="InterPro" id="IPR024107">
    <property type="entry name" value="Tyr-tRNA-ligase_bac_1"/>
</dbReference>
<dbReference type="NCBIfam" id="TIGR00234">
    <property type="entry name" value="tyrS"/>
    <property type="match status" value="1"/>
</dbReference>
<dbReference type="PANTHER" id="PTHR11766:SF0">
    <property type="entry name" value="TYROSINE--TRNA LIGASE, MITOCHONDRIAL"/>
    <property type="match status" value="1"/>
</dbReference>
<dbReference type="PANTHER" id="PTHR11766">
    <property type="entry name" value="TYROSYL-TRNA SYNTHETASE"/>
    <property type="match status" value="1"/>
</dbReference>
<dbReference type="Pfam" id="PF00579">
    <property type="entry name" value="tRNA-synt_1b"/>
    <property type="match status" value="1"/>
</dbReference>
<dbReference type="PRINTS" id="PR01040">
    <property type="entry name" value="TRNASYNTHTYR"/>
</dbReference>
<dbReference type="SUPFAM" id="SSF55174">
    <property type="entry name" value="Alpha-L RNA-binding motif"/>
    <property type="match status" value="1"/>
</dbReference>
<dbReference type="SUPFAM" id="SSF52374">
    <property type="entry name" value="Nucleotidylyl transferase"/>
    <property type="match status" value="1"/>
</dbReference>
<dbReference type="PROSITE" id="PS50889">
    <property type="entry name" value="S4"/>
    <property type="match status" value="1"/>
</dbReference>
<comment type="function">
    <text evidence="1">Catalyzes the attachment of tyrosine to tRNA(Tyr) in a two-step reaction: tyrosine is first activated by ATP to form Tyr-AMP and then transferred to the acceptor end of tRNA(Tyr).</text>
</comment>
<comment type="catalytic activity">
    <reaction evidence="1">
        <text>tRNA(Tyr) + L-tyrosine + ATP = L-tyrosyl-tRNA(Tyr) + AMP + diphosphate + H(+)</text>
        <dbReference type="Rhea" id="RHEA:10220"/>
        <dbReference type="Rhea" id="RHEA-COMP:9706"/>
        <dbReference type="Rhea" id="RHEA-COMP:9707"/>
        <dbReference type="ChEBI" id="CHEBI:15378"/>
        <dbReference type="ChEBI" id="CHEBI:30616"/>
        <dbReference type="ChEBI" id="CHEBI:33019"/>
        <dbReference type="ChEBI" id="CHEBI:58315"/>
        <dbReference type="ChEBI" id="CHEBI:78442"/>
        <dbReference type="ChEBI" id="CHEBI:78536"/>
        <dbReference type="ChEBI" id="CHEBI:456215"/>
        <dbReference type="EC" id="6.1.1.1"/>
    </reaction>
</comment>
<comment type="subunit">
    <text evidence="1">Homodimer.</text>
</comment>
<comment type="subcellular location">
    <subcellularLocation>
        <location evidence="1">Cytoplasm</location>
    </subcellularLocation>
</comment>
<comment type="similarity">
    <text evidence="1">Belongs to the class-I aminoacyl-tRNA synthetase family. TyrS type 1 subfamily.</text>
</comment>
<comment type="sequence caution" evidence="2">
    <conflict type="erroneous initiation">
        <sequence resource="EMBL-CDS" id="AAC65798"/>
    </conflict>
</comment>
<organism>
    <name type="scientific">Treponema pallidum (strain Nichols)</name>
    <dbReference type="NCBI Taxonomy" id="243276"/>
    <lineage>
        <taxon>Bacteria</taxon>
        <taxon>Pseudomonadati</taxon>
        <taxon>Spirochaetota</taxon>
        <taxon>Spirochaetia</taxon>
        <taxon>Spirochaetales</taxon>
        <taxon>Treponemataceae</taxon>
        <taxon>Treponema</taxon>
    </lineage>
</organism>
<sequence>MNPALARLQARGFIRQCTDLSALSARMDAGPLTFYVGVDPTGSSLHVGHMLPMFALKHLCDAGHRGCVLIGGGTARIGDPSGKTSMRKMLDYATLDAYAGAIVAQLDHFLSFDHRHVFYVNNRDWLAHLNYIDFLREVGAHFSVNKMLTYEAYKKRLETGLSFLEFNYQLLQSYDFLTLSDRYAVELQIGGDDQWGNIVAGADLVRRVRGKTVHGLTFPLITRADGQKMGKTEQGALFLDPALVSPYDFFQYWRNTPDEDVRRFLLLFTFLSVRDVEAILTQGINCAKELLAYEVTRLMHGTAVAQVALQGARAAFGGCGDKCALPTFELTQCTLQVGIKVTDLFVQVGLCTTKSDARRLIAQGGAFVGLQRVADIGAVIDQSALDLDGTVIVRAGKKRVVRIVTDVLE</sequence>
<name>SYY_TREPA</name>
<proteinExistence type="inferred from homology"/>
<gene>
    <name evidence="1" type="primary">tyrS</name>
    <name type="ordered locus">TP_0834</name>
</gene>
<feature type="chain" id="PRO_0000055667" description="Tyrosine--tRNA ligase">
    <location>
        <begin position="1"/>
        <end position="409"/>
    </location>
</feature>
<feature type="domain" description="S4 RNA-binding" evidence="1">
    <location>
        <begin position="339"/>
        <end position="404"/>
    </location>
</feature>
<feature type="short sequence motif" description="'HIGH' region">
    <location>
        <begin position="40"/>
        <end position="49"/>
    </location>
</feature>
<feature type="short sequence motif" description="'KMSKS' region">
    <location>
        <begin position="228"/>
        <end position="232"/>
    </location>
</feature>
<feature type="binding site" evidence="1">
    <location>
        <position position="35"/>
    </location>
    <ligand>
        <name>L-tyrosine</name>
        <dbReference type="ChEBI" id="CHEBI:58315"/>
    </ligand>
</feature>
<feature type="binding site" evidence="1">
    <location>
        <position position="168"/>
    </location>
    <ligand>
        <name>L-tyrosine</name>
        <dbReference type="ChEBI" id="CHEBI:58315"/>
    </ligand>
</feature>
<feature type="binding site" evidence="1">
    <location>
        <position position="172"/>
    </location>
    <ligand>
        <name>L-tyrosine</name>
        <dbReference type="ChEBI" id="CHEBI:58315"/>
    </ligand>
</feature>
<feature type="binding site" evidence="1">
    <location>
        <position position="231"/>
    </location>
    <ligand>
        <name>ATP</name>
        <dbReference type="ChEBI" id="CHEBI:30616"/>
    </ligand>
</feature>
<keyword id="KW-0030">Aminoacyl-tRNA synthetase</keyword>
<keyword id="KW-0067">ATP-binding</keyword>
<keyword id="KW-0963">Cytoplasm</keyword>
<keyword id="KW-0436">Ligase</keyword>
<keyword id="KW-0547">Nucleotide-binding</keyword>
<keyword id="KW-0648">Protein biosynthesis</keyword>
<keyword id="KW-1185">Reference proteome</keyword>
<keyword id="KW-0694">RNA-binding</keyword>